<keyword id="KW-0067">ATP-binding</keyword>
<keyword id="KW-0997">Cell inner membrane</keyword>
<keyword id="KW-1003">Cell membrane</keyword>
<keyword id="KW-0406">Ion transport</keyword>
<keyword id="KW-0472">Membrane</keyword>
<keyword id="KW-0547">Nucleotide-binding</keyword>
<keyword id="KW-0630">Potassium</keyword>
<keyword id="KW-0633">Potassium transport</keyword>
<keyword id="KW-1185">Reference proteome</keyword>
<keyword id="KW-0812">Transmembrane</keyword>
<keyword id="KW-1133">Transmembrane helix</keyword>
<keyword id="KW-0813">Transport</keyword>
<reference key="1">
    <citation type="journal article" date="2001" name="DNA Res.">
        <title>Complete genomic sequence of the filamentous nitrogen-fixing cyanobacterium Anabaena sp. strain PCC 7120.</title>
        <authorList>
            <person name="Kaneko T."/>
            <person name="Nakamura Y."/>
            <person name="Wolk C.P."/>
            <person name="Kuritz T."/>
            <person name="Sasamoto S."/>
            <person name="Watanabe A."/>
            <person name="Iriguchi M."/>
            <person name="Ishikawa A."/>
            <person name="Kawashima K."/>
            <person name="Kimura T."/>
            <person name="Kishida Y."/>
            <person name="Kohara M."/>
            <person name="Matsumoto M."/>
            <person name="Matsuno A."/>
            <person name="Muraki A."/>
            <person name="Nakazaki N."/>
            <person name="Shimpo S."/>
            <person name="Sugimoto M."/>
            <person name="Takazawa M."/>
            <person name="Yamada M."/>
            <person name="Yasuda M."/>
            <person name="Tabata S."/>
        </authorList>
    </citation>
    <scope>NUCLEOTIDE SEQUENCE [LARGE SCALE GENOMIC DNA]</scope>
    <source>
        <strain>PCC 7120 / SAG 25.82 / UTEX 2576</strain>
    </source>
</reference>
<proteinExistence type="inferred from homology"/>
<comment type="function">
    <text evidence="1">Part of the high-affinity ATP-driven potassium transport (or Kdp) system, which catalyzes the hydrolysis of ATP coupled with the electrogenic transport of potassium into the cytoplasm. This subunit acts as a catalytic chaperone that increases the ATP-binding affinity of the ATP-hydrolyzing subunit KdpB by the formation of a transient KdpB/KdpC/ATP ternary complex.</text>
</comment>
<comment type="subunit">
    <text evidence="1">The system is composed of three essential subunits: KdpA, KdpB and KdpC.</text>
</comment>
<comment type="subcellular location">
    <subcellularLocation>
        <location evidence="1">Cell inner membrane</location>
        <topology evidence="1">Single-pass membrane protein</topology>
    </subcellularLocation>
</comment>
<comment type="similarity">
    <text evidence="1">Belongs to the KdpC family.</text>
</comment>
<sequence length="199" mass="21938">MSFIREILRAIRITLIFWLVTAIIYPLAILVVGQGLFPIQANGSIMENIEGTPIGSTLISQVFTSEKYFHSRPSAVRYSQGRKAKPTGISGGSNLAPSNPALLERIIEEANQLRDENVQPIADLIYSSGSGLDPHISVQAARQQLERVARARGVQPDEILLAINKFTDGRFLGIFGEPGVNVLRLNYALDLQDINRQQN</sequence>
<feature type="chain" id="PRO_0000196984" description="Potassium-transporting ATPase KdpC subunit 2">
    <location>
        <begin position="1"/>
        <end position="199"/>
    </location>
</feature>
<feature type="transmembrane region" description="Helical" evidence="1">
    <location>
        <begin position="13"/>
        <end position="33"/>
    </location>
</feature>
<dbReference type="EMBL" id="BA000019">
    <property type="protein sequence ID" value="BAB75942.1"/>
    <property type="molecule type" value="Genomic_DNA"/>
</dbReference>
<dbReference type="PIR" id="AD2336">
    <property type="entry name" value="AD2336"/>
</dbReference>
<dbReference type="SMR" id="Q8YPF1"/>
<dbReference type="STRING" id="103690.gene:10496292"/>
<dbReference type="KEGG" id="ana:all4243"/>
<dbReference type="eggNOG" id="COG2156">
    <property type="taxonomic scope" value="Bacteria"/>
</dbReference>
<dbReference type="OrthoDB" id="9809491at2"/>
<dbReference type="Proteomes" id="UP000002483">
    <property type="component" value="Chromosome"/>
</dbReference>
<dbReference type="GO" id="GO:0005886">
    <property type="term" value="C:plasma membrane"/>
    <property type="evidence" value="ECO:0007669"/>
    <property type="project" value="UniProtKB-SubCell"/>
</dbReference>
<dbReference type="GO" id="GO:0005524">
    <property type="term" value="F:ATP binding"/>
    <property type="evidence" value="ECO:0007669"/>
    <property type="project" value="UniProtKB-UniRule"/>
</dbReference>
<dbReference type="GO" id="GO:0008556">
    <property type="term" value="F:P-type potassium transmembrane transporter activity"/>
    <property type="evidence" value="ECO:0007669"/>
    <property type="project" value="InterPro"/>
</dbReference>
<dbReference type="HAMAP" id="MF_00276">
    <property type="entry name" value="KdpC"/>
    <property type="match status" value="1"/>
</dbReference>
<dbReference type="InterPro" id="IPR003820">
    <property type="entry name" value="KdpC"/>
</dbReference>
<dbReference type="NCBIfam" id="TIGR00681">
    <property type="entry name" value="kdpC"/>
    <property type="match status" value="1"/>
</dbReference>
<dbReference type="NCBIfam" id="NF010607">
    <property type="entry name" value="PRK14003.1"/>
    <property type="match status" value="1"/>
</dbReference>
<dbReference type="PANTHER" id="PTHR30042">
    <property type="entry name" value="POTASSIUM-TRANSPORTING ATPASE C CHAIN"/>
    <property type="match status" value="1"/>
</dbReference>
<dbReference type="PANTHER" id="PTHR30042:SF2">
    <property type="entry name" value="POTASSIUM-TRANSPORTING ATPASE KDPC SUBUNIT"/>
    <property type="match status" value="1"/>
</dbReference>
<dbReference type="Pfam" id="PF02669">
    <property type="entry name" value="KdpC"/>
    <property type="match status" value="1"/>
</dbReference>
<dbReference type="PIRSF" id="PIRSF001296">
    <property type="entry name" value="K_ATPase_KdpC"/>
    <property type="match status" value="1"/>
</dbReference>
<gene>
    <name evidence="1" type="primary">kdpC2</name>
    <name type="ordered locus">all4243</name>
</gene>
<organism>
    <name type="scientific">Nostoc sp. (strain PCC 7120 / SAG 25.82 / UTEX 2576)</name>
    <dbReference type="NCBI Taxonomy" id="103690"/>
    <lineage>
        <taxon>Bacteria</taxon>
        <taxon>Bacillati</taxon>
        <taxon>Cyanobacteriota</taxon>
        <taxon>Cyanophyceae</taxon>
        <taxon>Nostocales</taxon>
        <taxon>Nostocaceae</taxon>
        <taxon>Nostoc</taxon>
    </lineage>
</organism>
<evidence type="ECO:0000255" key="1">
    <source>
        <dbReference type="HAMAP-Rule" id="MF_00276"/>
    </source>
</evidence>
<protein>
    <recommendedName>
        <fullName evidence="1">Potassium-transporting ATPase KdpC subunit 2</fullName>
    </recommendedName>
    <alternativeName>
        <fullName evidence="1">ATP phosphohydrolase [potassium-transporting] C chain 2</fullName>
    </alternativeName>
    <alternativeName>
        <fullName evidence="1">Potassium-binding and translocating subunit C 2</fullName>
    </alternativeName>
    <alternativeName>
        <fullName evidence="1">Potassium-translocating ATPase C chain 2</fullName>
    </alternativeName>
</protein>
<accession>Q8YPF1</accession>
<name>KDPC2_NOSS1</name>